<reference key="1">
    <citation type="journal article" date="2019" name="Plant Physiol.">
        <title>OsSYP121 accumulates at fungal penetration sites and mediates host resistance to rice blast.</title>
        <authorList>
            <person name="Cao W.L."/>
            <person name="Yu Y."/>
            <person name="Li M.Y."/>
            <person name="Luo J."/>
            <person name="Wang R.S."/>
            <person name="Tang H.J."/>
            <person name="Huang J."/>
            <person name="Wang J.F."/>
            <person name="Zhang H.S."/>
            <person name="Bao Y.M."/>
        </authorList>
    </citation>
    <scope>NUCLEOTIDE SEQUENCE [MRNA]</scope>
    <scope>FUNCTION</scope>
    <scope>INTERACTION WITH SNAP32</scope>
    <scope>SUBCELLULAR LOCATION</scope>
    <scope>TISSUE SPECIFICITY</scope>
    <scope>INDUCTION</scope>
</reference>
<reference key="2">
    <citation type="journal article" date="2005" name="Genome Res.">
        <title>Sequence, annotation, and analysis of synteny between rice chromosome 3 and diverged grass species.</title>
        <authorList>
            <consortium name="The rice chromosome 3 sequencing consortium"/>
            <person name="Buell C.R."/>
            <person name="Yuan Q."/>
            <person name="Ouyang S."/>
            <person name="Liu J."/>
            <person name="Zhu W."/>
            <person name="Wang A."/>
            <person name="Maiti R."/>
            <person name="Haas B."/>
            <person name="Wortman J."/>
            <person name="Pertea M."/>
            <person name="Jones K.M."/>
            <person name="Kim M."/>
            <person name="Overton L."/>
            <person name="Tsitrin T."/>
            <person name="Fadrosh D."/>
            <person name="Bera J."/>
            <person name="Weaver B."/>
            <person name="Jin S."/>
            <person name="Johri S."/>
            <person name="Reardon M."/>
            <person name="Webb K."/>
            <person name="Hill J."/>
            <person name="Moffat K."/>
            <person name="Tallon L."/>
            <person name="Van Aken S."/>
            <person name="Lewis M."/>
            <person name="Utterback T."/>
            <person name="Feldblyum T."/>
            <person name="Zismann V."/>
            <person name="Iobst S."/>
            <person name="Hsiao J."/>
            <person name="de Vazeille A.R."/>
            <person name="Salzberg S.L."/>
            <person name="White O."/>
            <person name="Fraser C.M."/>
            <person name="Yu Y."/>
            <person name="Kim H."/>
            <person name="Rambo T."/>
            <person name="Currie J."/>
            <person name="Collura K."/>
            <person name="Kernodle-Thompson S."/>
            <person name="Wei F."/>
            <person name="Kudrna K."/>
            <person name="Ammiraju J.S.S."/>
            <person name="Luo M."/>
            <person name="Goicoechea J.L."/>
            <person name="Wing R.A."/>
            <person name="Henry D."/>
            <person name="Oates R."/>
            <person name="Palmer M."/>
            <person name="Pries G."/>
            <person name="Saski C."/>
            <person name="Simmons J."/>
            <person name="Soderlund C."/>
            <person name="Nelson W."/>
            <person name="de la Bastide M."/>
            <person name="Spiegel L."/>
            <person name="Nascimento L."/>
            <person name="Huang E."/>
            <person name="Preston R."/>
            <person name="Zutavern T."/>
            <person name="Palmer L."/>
            <person name="O'Shaughnessy A."/>
            <person name="Dike S."/>
            <person name="McCombie W.R."/>
            <person name="Minx P."/>
            <person name="Cordum H."/>
            <person name="Wilson R."/>
            <person name="Jin W."/>
            <person name="Lee H.R."/>
            <person name="Jiang J."/>
            <person name="Jackson S."/>
        </authorList>
    </citation>
    <scope>NUCLEOTIDE SEQUENCE [LARGE SCALE GENOMIC DNA]</scope>
    <source>
        <strain>cv. Nipponbare</strain>
    </source>
</reference>
<reference key="3">
    <citation type="journal article" date="2005" name="Nature">
        <title>The map-based sequence of the rice genome.</title>
        <authorList>
            <consortium name="International rice genome sequencing project (IRGSP)"/>
        </authorList>
    </citation>
    <scope>NUCLEOTIDE SEQUENCE [LARGE SCALE GENOMIC DNA]</scope>
    <source>
        <strain>cv. Nipponbare</strain>
    </source>
</reference>
<reference key="4">
    <citation type="journal article" date="2008" name="Nucleic Acids Res.">
        <title>The rice annotation project database (RAP-DB): 2008 update.</title>
        <authorList>
            <consortium name="The rice annotation project (RAP)"/>
        </authorList>
    </citation>
    <scope>GENOME REANNOTATION</scope>
    <source>
        <strain>cv. Nipponbare</strain>
    </source>
</reference>
<reference key="5">
    <citation type="journal article" date="2013" name="Rice">
        <title>Improvement of the Oryza sativa Nipponbare reference genome using next generation sequence and optical map data.</title>
        <authorList>
            <person name="Kawahara Y."/>
            <person name="de la Bastide M."/>
            <person name="Hamilton J.P."/>
            <person name="Kanamori H."/>
            <person name="McCombie W.R."/>
            <person name="Ouyang S."/>
            <person name="Schwartz D.C."/>
            <person name="Tanaka T."/>
            <person name="Wu J."/>
            <person name="Zhou S."/>
            <person name="Childs K.L."/>
            <person name="Davidson R.M."/>
            <person name="Lin H."/>
            <person name="Quesada-Ocampo L."/>
            <person name="Vaillancourt B."/>
            <person name="Sakai H."/>
            <person name="Lee S.S."/>
            <person name="Kim J."/>
            <person name="Numa H."/>
            <person name="Itoh T."/>
            <person name="Buell C.R."/>
            <person name="Matsumoto T."/>
        </authorList>
    </citation>
    <scope>GENOME REANNOTATION</scope>
    <source>
        <strain>cv. Nipponbare</strain>
    </source>
</reference>
<reference key="6">
    <citation type="journal article" date="2003" name="Science">
        <title>Collection, mapping, and annotation of over 28,000 cDNA clones from japonica rice.</title>
        <authorList>
            <consortium name="The rice full-length cDNA consortium"/>
        </authorList>
    </citation>
    <scope>NUCLEOTIDE SEQUENCE [LARGE SCALE MRNA]</scope>
    <source>
        <strain>cv. Nipponbare</strain>
    </source>
</reference>
<dbReference type="EMBL" id="DQ231252">
    <property type="protein sequence ID" value="ABB22782.1"/>
    <property type="molecule type" value="mRNA"/>
</dbReference>
<dbReference type="EMBL" id="AC084296">
    <property type="protein sequence ID" value="AAT75251.1"/>
    <property type="molecule type" value="Genomic_DNA"/>
</dbReference>
<dbReference type="EMBL" id="DP000009">
    <property type="protein sequence ID" value="ABF99241.1"/>
    <property type="molecule type" value="Genomic_DNA"/>
</dbReference>
<dbReference type="EMBL" id="AP008209">
    <property type="protein sequence ID" value="BAF13408.1"/>
    <property type="molecule type" value="Genomic_DNA"/>
</dbReference>
<dbReference type="EMBL" id="AP014959">
    <property type="protein sequence ID" value="BAS86738.1"/>
    <property type="molecule type" value="Genomic_DNA"/>
</dbReference>
<dbReference type="EMBL" id="AK065950">
    <property type="protein sequence ID" value="BAG89748.1"/>
    <property type="molecule type" value="mRNA"/>
</dbReference>
<dbReference type="SMR" id="Q6F3B4"/>
<dbReference type="FunCoup" id="Q6F3B4">
    <property type="interactions" value="751"/>
</dbReference>
<dbReference type="STRING" id="39947.Q6F3B4"/>
<dbReference type="PaxDb" id="39947-Q6F3B4"/>
<dbReference type="EnsemblPlants" id="Os03t0787000-01">
    <property type="protein sequence ID" value="Os03t0787000-01"/>
    <property type="gene ID" value="Os03g0787000"/>
</dbReference>
<dbReference type="GeneID" id="4334356"/>
<dbReference type="Gramene" id="Os03t0787000-01">
    <property type="protein sequence ID" value="Os03t0787000-01"/>
    <property type="gene ID" value="Os03g0787000"/>
</dbReference>
<dbReference type="KEGG" id="dosa:Os03g0787000"/>
<dbReference type="KEGG" id="osa:4334356"/>
<dbReference type="eggNOG" id="KOG0810">
    <property type="taxonomic scope" value="Eukaryota"/>
</dbReference>
<dbReference type="HOGENOM" id="CLU_042423_1_1_1"/>
<dbReference type="InParanoid" id="Q6F3B4"/>
<dbReference type="OMA" id="WIAICCA"/>
<dbReference type="OrthoDB" id="10255013at2759"/>
<dbReference type="Proteomes" id="UP000000763">
    <property type="component" value="Chromosome 3"/>
</dbReference>
<dbReference type="Proteomes" id="UP000059680">
    <property type="component" value="Chromosome 3"/>
</dbReference>
<dbReference type="GO" id="GO:0012505">
    <property type="term" value="C:endomembrane system"/>
    <property type="evidence" value="ECO:0000318"/>
    <property type="project" value="GO_Central"/>
</dbReference>
<dbReference type="GO" id="GO:0005886">
    <property type="term" value="C:plasma membrane"/>
    <property type="evidence" value="ECO:0000318"/>
    <property type="project" value="GO_Central"/>
</dbReference>
<dbReference type="GO" id="GO:0031201">
    <property type="term" value="C:SNARE complex"/>
    <property type="evidence" value="ECO:0000318"/>
    <property type="project" value="GO_Central"/>
</dbReference>
<dbReference type="GO" id="GO:0005484">
    <property type="term" value="F:SNAP receptor activity"/>
    <property type="evidence" value="ECO:0000318"/>
    <property type="project" value="GO_Central"/>
</dbReference>
<dbReference type="GO" id="GO:0000149">
    <property type="term" value="F:SNARE binding"/>
    <property type="evidence" value="ECO:0000318"/>
    <property type="project" value="GO_Central"/>
</dbReference>
<dbReference type="GO" id="GO:0006952">
    <property type="term" value="P:defense response"/>
    <property type="evidence" value="ECO:0007669"/>
    <property type="project" value="UniProtKB-KW"/>
</dbReference>
<dbReference type="GO" id="GO:0006887">
    <property type="term" value="P:exocytosis"/>
    <property type="evidence" value="ECO:0000318"/>
    <property type="project" value="GO_Central"/>
</dbReference>
<dbReference type="GO" id="GO:0006886">
    <property type="term" value="P:intracellular protein transport"/>
    <property type="evidence" value="ECO:0000318"/>
    <property type="project" value="GO_Central"/>
</dbReference>
<dbReference type="GO" id="GO:0048278">
    <property type="term" value="P:vesicle docking"/>
    <property type="evidence" value="ECO:0000318"/>
    <property type="project" value="GO_Central"/>
</dbReference>
<dbReference type="GO" id="GO:0006906">
    <property type="term" value="P:vesicle fusion"/>
    <property type="evidence" value="ECO:0000318"/>
    <property type="project" value="GO_Central"/>
</dbReference>
<dbReference type="CDD" id="cd15848">
    <property type="entry name" value="SNARE_syntaxin1-like"/>
    <property type="match status" value="1"/>
</dbReference>
<dbReference type="CDD" id="cd00179">
    <property type="entry name" value="SynN"/>
    <property type="match status" value="1"/>
</dbReference>
<dbReference type="FunFam" id="1.20.58.70:FF:000003">
    <property type="entry name" value="Qa-SNARE, Sso1/Syntaxin1-type, SYP12A-group"/>
    <property type="match status" value="1"/>
</dbReference>
<dbReference type="FunFam" id="1.20.5.110:FF:000008">
    <property type="entry name" value="Syntaxin 132"/>
    <property type="match status" value="1"/>
</dbReference>
<dbReference type="Gene3D" id="1.20.5.110">
    <property type="match status" value="1"/>
</dbReference>
<dbReference type="Gene3D" id="1.20.58.70">
    <property type="match status" value="1"/>
</dbReference>
<dbReference type="InterPro" id="IPR010989">
    <property type="entry name" value="SNARE"/>
</dbReference>
<dbReference type="InterPro" id="IPR045242">
    <property type="entry name" value="Syntaxin"/>
</dbReference>
<dbReference type="InterPro" id="IPR006012">
    <property type="entry name" value="Syntaxin/epimorphin_CS"/>
</dbReference>
<dbReference type="InterPro" id="IPR006011">
    <property type="entry name" value="Syntaxin_N"/>
</dbReference>
<dbReference type="InterPro" id="IPR000727">
    <property type="entry name" value="T_SNARE_dom"/>
</dbReference>
<dbReference type="PANTHER" id="PTHR19957">
    <property type="entry name" value="SYNTAXIN"/>
    <property type="match status" value="1"/>
</dbReference>
<dbReference type="PANTHER" id="PTHR19957:SF80">
    <property type="entry name" value="SYNTAXIN-121"/>
    <property type="match status" value="1"/>
</dbReference>
<dbReference type="Pfam" id="PF05739">
    <property type="entry name" value="SNARE"/>
    <property type="match status" value="1"/>
</dbReference>
<dbReference type="Pfam" id="PF00804">
    <property type="entry name" value="Syntaxin"/>
    <property type="match status" value="1"/>
</dbReference>
<dbReference type="SMART" id="SM00503">
    <property type="entry name" value="SynN"/>
    <property type="match status" value="1"/>
</dbReference>
<dbReference type="SMART" id="SM00397">
    <property type="entry name" value="t_SNARE"/>
    <property type="match status" value="1"/>
</dbReference>
<dbReference type="SUPFAM" id="SSF47661">
    <property type="entry name" value="t-snare proteins"/>
    <property type="match status" value="1"/>
</dbReference>
<dbReference type="PROSITE" id="PS00914">
    <property type="entry name" value="SYNTAXIN"/>
    <property type="match status" value="1"/>
</dbReference>
<dbReference type="PROSITE" id="PS50192">
    <property type="entry name" value="T_SNARE"/>
    <property type="match status" value="1"/>
</dbReference>
<keyword id="KW-1003">Cell membrane</keyword>
<keyword id="KW-0472">Membrane</keyword>
<keyword id="KW-0611">Plant defense</keyword>
<keyword id="KW-0653">Protein transport</keyword>
<keyword id="KW-1185">Reference proteome</keyword>
<keyword id="KW-0812">Transmembrane</keyword>
<keyword id="KW-1133">Transmembrane helix</keyword>
<keyword id="KW-0813">Transport</keyword>
<proteinExistence type="evidence at protein level"/>
<name>SY121_ORYSJ</name>
<accession>Q6F3B4</accession>
<accession>A0A0P0W4H1</accession>
<accession>Q309H8</accession>
<sequence length="330" mass="35611">MNNLFSSSWKRTGGGGGGDGDIESGGGVEMAPPPGAAAGASLDRFFEDVESIKDELRDLERIQRSLHDANEGGKSLHDAAAVRALRARMDADVAAAIKKAKVVKLRLESLDRANAANRSVPGCGPGSSTDRTRTSVVAGLRKKLRDSMESFSSLRARISSEYRETVARRYYTVTGEQPDEATLDNLAETGEGERFLQRAIAEQGRGEVLGVVAEIQERHGAVAELERSLLELHQVFNDMAVLVAAQGEQLDDIETHVGRARSFVDRGREQLVVARKHQKSTRKWTCIAIIILLVLILVVVLPIVLKFVNNNKSSSSSPAPATPSPPPPTA</sequence>
<protein>
    <recommendedName>
        <fullName evidence="5">Syntaxin-121</fullName>
        <shortName evidence="5">OsSYP121</shortName>
    </recommendedName>
</protein>
<feature type="chain" id="PRO_0000456756" description="Syntaxin-121">
    <location>
        <begin position="1"/>
        <end position="330"/>
    </location>
</feature>
<feature type="topological domain" description="Cytoplasmic" evidence="1">
    <location>
        <begin position="1"/>
        <end position="284"/>
    </location>
</feature>
<feature type="transmembrane region" description="Helical; Anchor for type IV membrane protein" evidence="1">
    <location>
        <begin position="285"/>
        <end position="305"/>
    </location>
</feature>
<feature type="topological domain" description="Vesicular" evidence="1">
    <location>
        <begin position="306"/>
        <end position="330"/>
    </location>
</feature>
<feature type="domain" description="t-SNARE coiled-coil homology" evidence="2">
    <location>
        <begin position="212"/>
        <end position="274"/>
    </location>
</feature>
<feature type="region of interest" description="Disordered" evidence="3">
    <location>
        <begin position="1"/>
        <end position="39"/>
    </location>
</feature>
<feature type="region of interest" description="Disordered" evidence="3">
    <location>
        <begin position="311"/>
        <end position="330"/>
    </location>
</feature>
<feature type="compositionally biased region" description="Polar residues" evidence="3">
    <location>
        <begin position="1"/>
        <end position="10"/>
    </location>
</feature>
<feature type="compositionally biased region" description="Gly residues" evidence="3">
    <location>
        <begin position="12"/>
        <end position="28"/>
    </location>
</feature>
<feature type="compositionally biased region" description="Pro residues" evidence="3">
    <location>
        <begin position="320"/>
        <end position="330"/>
    </location>
</feature>
<feature type="sequence conflict" description="In Ref. 1; ABB22782." evidence="6" ref="1">
    <original>A</original>
    <variation>T</variation>
    <location>
        <position position="95"/>
    </location>
</feature>
<comment type="function">
    <text evidence="4">Vesicle trafficking protein that functions in the secretory pathway (PubMed:30617050). Involved in plant defense by mediating host resistance to the rice blast fungus Magnaporthe oryzae (PubMed:30617050). The interaction with SNAP32 may contribute to host resistance to the rice blast fungus (PubMed:30617050).</text>
</comment>
<comment type="subunit">
    <text evidence="4">Interacts with SNAP32.</text>
</comment>
<comment type="subcellular location">
    <subcellularLocation>
        <location evidence="4">Cell membrane</location>
        <topology evidence="1">Single-pass type IV membrane protein</topology>
    </subcellularLocation>
    <text evidence="4">Localizes at the plasma membrane.</text>
</comment>
<comment type="tissue specificity">
    <text evidence="4">Expressed in roots, stems, leaf blades and leaf sheaths.</text>
</comment>
<comment type="induction">
    <text evidence="4">Induced by infection with the fungal pathogen Magnaporthe oryzae.</text>
</comment>
<comment type="miscellaneous">
    <text evidence="4">Plants overexpressing SYP121 exhibit enhanced resistance to the fungal pathogen Magnaporthe oryzae (PubMed:30617050). Plants silencing SYP121 exhibit increased susceptibility to the fungal pathogen Magnaporthe oryzae (PubMed:30617050).</text>
</comment>
<comment type="similarity">
    <text evidence="6">Belongs to the syntaxin family.</text>
</comment>
<evidence type="ECO:0000255" key="1"/>
<evidence type="ECO:0000255" key="2">
    <source>
        <dbReference type="PROSITE-ProRule" id="PRU00202"/>
    </source>
</evidence>
<evidence type="ECO:0000256" key="3">
    <source>
        <dbReference type="SAM" id="MobiDB-lite"/>
    </source>
</evidence>
<evidence type="ECO:0000269" key="4">
    <source>
    </source>
</evidence>
<evidence type="ECO:0000303" key="5">
    <source>
    </source>
</evidence>
<evidence type="ECO:0000305" key="6"/>
<evidence type="ECO:0000312" key="7">
    <source>
        <dbReference type="EMBL" id="AAT75251.1"/>
    </source>
</evidence>
<evidence type="ECO:0000312" key="8">
    <source>
        <dbReference type="EMBL" id="ABF99241.1"/>
    </source>
</evidence>
<evidence type="ECO:0000312" key="9">
    <source>
        <dbReference type="EMBL" id="BAS86738.1"/>
    </source>
</evidence>
<gene>
    <name evidence="5" type="primary">SYP121</name>
    <name evidence="9" type="ordered locus">Os03g0787000</name>
    <name evidence="8" type="ordered locus">LOC_Os03g57310</name>
    <name evidence="7" type="ORF">OSJNBb0024J04.6</name>
</gene>
<organism>
    <name type="scientific">Oryza sativa subsp. japonica</name>
    <name type="common">Rice</name>
    <dbReference type="NCBI Taxonomy" id="39947"/>
    <lineage>
        <taxon>Eukaryota</taxon>
        <taxon>Viridiplantae</taxon>
        <taxon>Streptophyta</taxon>
        <taxon>Embryophyta</taxon>
        <taxon>Tracheophyta</taxon>
        <taxon>Spermatophyta</taxon>
        <taxon>Magnoliopsida</taxon>
        <taxon>Liliopsida</taxon>
        <taxon>Poales</taxon>
        <taxon>Poaceae</taxon>
        <taxon>BOP clade</taxon>
        <taxon>Oryzoideae</taxon>
        <taxon>Oryzeae</taxon>
        <taxon>Oryzinae</taxon>
        <taxon>Oryza</taxon>
        <taxon>Oryza sativa</taxon>
    </lineage>
</organism>